<dbReference type="EC" id="2.7.3.9" evidence="1"/>
<dbReference type="EMBL" id="AE016826">
    <property type="protein sequence ID" value="AAO26799.1"/>
    <property type="molecule type" value="Genomic_DNA"/>
</dbReference>
<dbReference type="RefSeq" id="WP_011091200.1">
    <property type="nucleotide sequence ID" value="NC_004545.1"/>
</dbReference>
<dbReference type="SMR" id="Q89B04"/>
<dbReference type="STRING" id="224915.bbp_060"/>
<dbReference type="KEGG" id="bab:bbp_060"/>
<dbReference type="eggNOG" id="COG1080">
    <property type="taxonomic scope" value="Bacteria"/>
</dbReference>
<dbReference type="HOGENOM" id="CLU_007308_7_0_6"/>
<dbReference type="OrthoDB" id="9765468at2"/>
<dbReference type="Proteomes" id="UP000000601">
    <property type="component" value="Chromosome"/>
</dbReference>
<dbReference type="GO" id="GO:0005737">
    <property type="term" value="C:cytoplasm"/>
    <property type="evidence" value="ECO:0007669"/>
    <property type="project" value="UniProtKB-SubCell"/>
</dbReference>
<dbReference type="GO" id="GO:0016301">
    <property type="term" value="F:kinase activity"/>
    <property type="evidence" value="ECO:0007669"/>
    <property type="project" value="UniProtKB-KW"/>
</dbReference>
<dbReference type="GO" id="GO:0046872">
    <property type="term" value="F:metal ion binding"/>
    <property type="evidence" value="ECO:0007669"/>
    <property type="project" value="UniProtKB-KW"/>
</dbReference>
<dbReference type="GO" id="GO:0008965">
    <property type="term" value="F:phosphoenolpyruvate-protein phosphotransferase activity"/>
    <property type="evidence" value="ECO:0007669"/>
    <property type="project" value="UniProtKB-EC"/>
</dbReference>
<dbReference type="GO" id="GO:0009401">
    <property type="term" value="P:phosphoenolpyruvate-dependent sugar phosphotransferase system"/>
    <property type="evidence" value="ECO:0007669"/>
    <property type="project" value="UniProtKB-KW"/>
</dbReference>
<dbReference type="FunFam" id="3.20.20.60:FF:000007">
    <property type="entry name" value="Phosphoenolpyruvate-protein phosphotransferase"/>
    <property type="match status" value="1"/>
</dbReference>
<dbReference type="Gene3D" id="3.20.20.60">
    <property type="entry name" value="Phosphoenolpyruvate-binding domains"/>
    <property type="match status" value="1"/>
</dbReference>
<dbReference type="Gene3D" id="3.50.30.10">
    <property type="entry name" value="Phosphohistidine domain"/>
    <property type="match status" value="1"/>
</dbReference>
<dbReference type="Gene3D" id="1.10.274.10">
    <property type="entry name" value="PtsI, HPr-binding domain"/>
    <property type="match status" value="1"/>
</dbReference>
<dbReference type="InterPro" id="IPR008279">
    <property type="entry name" value="PEP-util_enz_mobile_dom"/>
</dbReference>
<dbReference type="InterPro" id="IPR050499">
    <property type="entry name" value="PEP-utilizing_PTS_enzyme"/>
</dbReference>
<dbReference type="InterPro" id="IPR018274">
    <property type="entry name" value="PEP_util_AS"/>
</dbReference>
<dbReference type="InterPro" id="IPR000121">
    <property type="entry name" value="PEP_util_C"/>
</dbReference>
<dbReference type="InterPro" id="IPR023151">
    <property type="entry name" value="PEP_util_CS"/>
</dbReference>
<dbReference type="InterPro" id="IPR036637">
    <property type="entry name" value="Phosphohistidine_dom_sf"/>
</dbReference>
<dbReference type="InterPro" id="IPR024692">
    <property type="entry name" value="PTS_EI"/>
</dbReference>
<dbReference type="InterPro" id="IPR006318">
    <property type="entry name" value="PTS_EI-like"/>
</dbReference>
<dbReference type="InterPro" id="IPR008731">
    <property type="entry name" value="PTS_EIN"/>
</dbReference>
<dbReference type="InterPro" id="IPR036618">
    <property type="entry name" value="PtsI_HPr-bd_sf"/>
</dbReference>
<dbReference type="InterPro" id="IPR015813">
    <property type="entry name" value="Pyrv/PenolPyrv_kinase-like_dom"/>
</dbReference>
<dbReference type="InterPro" id="IPR040442">
    <property type="entry name" value="Pyrv_kinase-like_dom_sf"/>
</dbReference>
<dbReference type="NCBIfam" id="NF008382">
    <property type="entry name" value="PRK11177.1"/>
    <property type="match status" value="1"/>
</dbReference>
<dbReference type="NCBIfam" id="TIGR01417">
    <property type="entry name" value="PTS_I_fam"/>
    <property type="match status" value="1"/>
</dbReference>
<dbReference type="PANTHER" id="PTHR46244">
    <property type="entry name" value="PHOSPHOENOLPYRUVATE-PROTEIN PHOSPHOTRANSFERASE"/>
    <property type="match status" value="1"/>
</dbReference>
<dbReference type="PANTHER" id="PTHR46244:SF6">
    <property type="entry name" value="PHOSPHOENOLPYRUVATE-PROTEIN PHOSPHOTRANSFERASE"/>
    <property type="match status" value="1"/>
</dbReference>
<dbReference type="Pfam" id="PF05524">
    <property type="entry name" value="PEP-utilisers_N"/>
    <property type="match status" value="1"/>
</dbReference>
<dbReference type="Pfam" id="PF00391">
    <property type="entry name" value="PEP-utilizers"/>
    <property type="match status" value="1"/>
</dbReference>
<dbReference type="Pfam" id="PF02896">
    <property type="entry name" value="PEP-utilizers_C"/>
    <property type="match status" value="1"/>
</dbReference>
<dbReference type="PIRSF" id="PIRSF000732">
    <property type="entry name" value="PTS_enzyme_I"/>
    <property type="match status" value="1"/>
</dbReference>
<dbReference type="PRINTS" id="PR01736">
    <property type="entry name" value="PHPHTRNFRASE"/>
</dbReference>
<dbReference type="SUPFAM" id="SSF47831">
    <property type="entry name" value="Enzyme I of the PEP:sugar phosphotransferase system HPr-binding (sub)domain"/>
    <property type="match status" value="1"/>
</dbReference>
<dbReference type="SUPFAM" id="SSF51621">
    <property type="entry name" value="Phosphoenolpyruvate/pyruvate domain"/>
    <property type="match status" value="1"/>
</dbReference>
<dbReference type="SUPFAM" id="SSF52009">
    <property type="entry name" value="Phosphohistidine domain"/>
    <property type="match status" value="1"/>
</dbReference>
<dbReference type="PROSITE" id="PS00742">
    <property type="entry name" value="PEP_ENZYMES_2"/>
    <property type="match status" value="1"/>
</dbReference>
<dbReference type="PROSITE" id="PS00370">
    <property type="entry name" value="PEP_ENZYMES_PHOS_SITE"/>
    <property type="match status" value="1"/>
</dbReference>
<comment type="function">
    <text evidence="1">General (non sugar-specific) component of the phosphoenolpyruvate-dependent sugar phosphotransferase system (sugar PTS). This major carbohydrate active-transport system catalyzes the phosphorylation of incoming sugar substrates concomitantly with their translocation across the cell membrane. Enzyme I transfers the phosphoryl group from phosphoenolpyruvate (PEP) to the phosphoryl carrier protein (HPr).</text>
</comment>
<comment type="catalytic activity">
    <reaction evidence="1">
        <text>L-histidyl-[protein] + phosphoenolpyruvate = N(pros)-phospho-L-histidyl-[protein] + pyruvate</text>
        <dbReference type="Rhea" id="RHEA:23880"/>
        <dbReference type="Rhea" id="RHEA-COMP:9745"/>
        <dbReference type="Rhea" id="RHEA-COMP:9746"/>
        <dbReference type="ChEBI" id="CHEBI:15361"/>
        <dbReference type="ChEBI" id="CHEBI:29979"/>
        <dbReference type="ChEBI" id="CHEBI:58702"/>
        <dbReference type="ChEBI" id="CHEBI:64837"/>
        <dbReference type="EC" id="2.7.3.9"/>
    </reaction>
</comment>
<comment type="cofactor">
    <cofactor evidence="1">
        <name>Mg(2+)</name>
        <dbReference type="ChEBI" id="CHEBI:18420"/>
    </cofactor>
</comment>
<comment type="subunit">
    <text evidence="1">Homodimer.</text>
</comment>
<comment type="subcellular location">
    <subcellularLocation>
        <location evidence="3">Cytoplasm</location>
    </subcellularLocation>
</comment>
<comment type="domain">
    <text evidence="1">The N-terminal domain contains the HPr binding site, the central domain the pyrophosphate/phosphate carrier histidine, and the C-terminal domain the pyruvate binding site.</text>
</comment>
<comment type="miscellaneous">
    <text evidence="1">The reaction takes place in three steps, mediated by a phosphocarrier histidine residue located on the surface of the central domain. The two first partial reactions are catalyzed at an active site located on the N-terminal domain, and the third partial reaction is catalyzed at an active site located on the C-terminal domain. For catalytic turnover, the central domain swivels from the concave surface of the N-terminal domain to that of the C-terminal domain.</text>
</comment>
<comment type="similarity">
    <text evidence="3">Belongs to the PEP-utilizing enzyme family.</text>
</comment>
<organism>
    <name type="scientific">Buchnera aphidicola subsp. Baizongia pistaciae (strain Bp)</name>
    <dbReference type="NCBI Taxonomy" id="224915"/>
    <lineage>
        <taxon>Bacteria</taxon>
        <taxon>Pseudomonadati</taxon>
        <taxon>Pseudomonadota</taxon>
        <taxon>Gammaproteobacteria</taxon>
        <taxon>Enterobacterales</taxon>
        <taxon>Erwiniaceae</taxon>
        <taxon>Buchnera</taxon>
    </lineage>
</organism>
<gene>
    <name type="primary">ptsI</name>
    <name type="ordered locus">bbp_060</name>
</gene>
<proteinExistence type="inferred from homology"/>
<keyword id="KW-0963">Cytoplasm</keyword>
<keyword id="KW-0418">Kinase</keyword>
<keyword id="KW-0460">Magnesium</keyword>
<keyword id="KW-0479">Metal-binding</keyword>
<keyword id="KW-0598">Phosphotransferase system</keyword>
<keyword id="KW-1185">Reference proteome</keyword>
<keyword id="KW-0762">Sugar transport</keyword>
<keyword id="KW-0808">Transferase</keyword>
<keyword id="KW-0813">Transport</keyword>
<accession>Q89B04</accession>
<sequence length="576" mass="65449">MISGILASPGITFGKALLLKNEILSINYKKISNQDIHQEVKKFINGKNKTICQLQEIKNKTQQKFENTQSNIFEGHIMLLEDDEFQQKIISLIQDRNISSEYATKIIIEEHAKTLEQLNDEYLKNRAIDIQDIGNRLLKNILNIDIKDLNNIKNPVILIARDLTPSETAQINLKKVLGFITDLGGQTSHTSIIARSLELPAIVGTKNITEKAKNDDFIILDSINNKISINPSLEEIHRIKQKKKKYESEKKLLIESKNLYAITKDKHKVEIGANISTIQDINNAKKYGAECIGLYRTEFLFMNRNYLPSEEEQFNTYKTIAEEMKNKSIIIRTMDVGGDKNISYMNIPKEENPFLGWRAIRIAIDRKEILHAQLKAILRASAFGKLRIMFPMIISVEEVRTLQYELEKLKQLLHHQKIPFNAKIEVGIMIETPASAIIAHHLAQEVDFFSIGSNDLTQYTLAVDRGNDLISHLYNPMSPSVLSLIQQVINASHKVGKWTGMCGELAGDEKATLLLLGMGLDEFSMSAATIPKIKKIIRESTFLDVKKLAKKVLLQPTYNEVNNTINTFININNKNK</sequence>
<feature type="chain" id="PRO_0000147063" description="Phosphoenolpyruvate-protein phosphotransferase">
    <location>
        <begin position="1"/>
        <end position="576"/>
    </location>
</feature>
<feature type="active site" description="Tele-phosphohistidine intermediate" evidence="1">
    <location>
        <position position="189"/>
    </location>
</feature>
<feature type="active site" description="Proton donor" evidence="1">
    <location>
        <position position="502"/>
    </location>
</feature>
<feature type="binding site" evidence="2">
    <location>
        <position position="296"/>
    </location>
    <ligand>
        <name>phosphoenolpyruvate</name>
        <dbReference type="ChEBI" id="CHEBI:58702"/>
    </ligand>
</feature>
<feature type="binding site" evidence="1">
    <location>
        <position position="332"/>
    </location>
    <ligand>
        <name>phosphoenolpyruvate</name>
        <dbReference type="ChEBI" id="CHEBI:58702"/>
    </ligand>
</feature>
<feature type="binding site" evidence="1">
    <location>
        <position position="431"/>
    </location>
    <ligand>
        <name>Mg(2+)</name>
        <dbReference type="ChEBI" id="CHEBI:18420"/>
    </ligand>
</feature>
<feature type="binding site" evidence="1">
    <location>
        <begin position="454"/>
        <end position="455"/>
    </location>
    <ligand>
        <name>phosphoenolpyruvate</name>
        <dbReference type="ChEBI" id="CHEBI:58702"/>
    </ligand>
</feature>
<feature type="binding site" evidence="1">
    <location>
        <position position="455"/>
    </location>
    <ligand>
        <name>Mg(2+)</name>
        <dbReference type="ChEBI" id="CHEBI:18420"/>
    </ligand>
</feature>
<feature type="binding site" evidence="2">
    <location>
        <position position="465"/>
    </location>
    <ligand>
        <name>phosphoenolpyruvate</name>
        <dbReference type="ChEBI" id="CHEBI:58702"/>
    </ligand>
</feature>
<protein>
    <recommendedName>
        <fullName evidence="1">Phosphoenolpyruvate-protein phosphotransferase</fullName>
        <ecNumber evidence="1">2.7.3.9</ecNumber>
    </recommendedName>
    <alternativeName>
        <fullName evidence="1">Phosphotransferase system, enzyme I</fullName>
    </alternativeName>
</protein>
<evidence type="ECO:0000250" key="1">
    <source>
        <dbReference type="UniProtKB" id="P08839"/>
    </source>
</evidence>
<evidence type="ECO:0000250" key="2">
    <source>
        <dbReference type="UniProtKB" id="P23533"/>
    </source>
</evidence>
<evidence type="ECO:0000305" key="3"/>
<name>PT1_BUCBP</name>
<reference key="1">
    <citation type="journal article" date="2003" name="Proc. Natl. Acad. Sci. U.S.A.">
        <title>Reductive genome evolution in Buchnera aphidicola.</title>
        <authorList>
            <person name="van Ham R.C.H.J."/>
            <person name="Kamerbeek J."/>
            <person name="Palacios C."/>
            <person name="Rausell C."/>
            <person name="Abascal F."/>
            <person name="Bastolla U."/>
            <person name="Fernandez J.M."/>
            <person name="Jimenez L."/>
            <person name="Postigo M."/>
            <person name="Silva F.J."/>
            <person name="Tamames J."/>
            <person name="Viguera E."/>
            <person name="Latorre A."/>
            <person name="Valencia A."/>
            <person name="Moran F."/>
            <person name="Moya A."/>
        </authorList>
    </citation>
    <scope>NUCLEOTIDE SEQUENCE [LARGE SCALE GENOMIC DNA]</scope>
    <source>
        <strain>Bp</strain>
    </source>
</reference>